<gene>
    <name evidence="10" type="primary">UBE2G2</name>
    <name evidence="8" type="synonym">UBC7</name>
</gene>
<proteinExistence type="evidence at protein level"/>
<protein>
    <recommendedName>
        <fullName>Ubiquitin-conjugating enzyme E2 G2</fullName>
        <ecNumber evidence="3">2.3.2.23</ecNumber>
    </recommendedName>
    <alternativeName>
        <fullName>E2 ubiquitin-conjugating enzyme G2</fullName>
    </alternativeName>
    <alternativeName>
        <fullName>Ubiquitin carrier protein G2</fullName>
    </alternativeName>
    <alternativeName>
        <fullName>Ubiquitin-protein ligase G2</fullName>
    </alternativeName>
</protein>
<feature type="initiator methionine" description="Removed" evidence="11">
    <location>
        <position position="1"/>
    </location>
</feature>
<feature type="chain" id="PRO_0000082483" description="Ubiquitin-conjugating enzyme E2 G2">
    <location>
        <begin position="2"/>
        <end position="165"/>
    </location>
</feature>
<feature type="domain" description="UBC core" evidence="1">
    <location>
        <begin position="4"/>
        <end position="164"/>
    </location>
</feature>
<feature type="active site" description="Glycyl thioester intermediate" evidence="1">
    <location>
        <position position="89"/>
    </location>
</feature>
<feature type="modified residue" description="N-acetylalanine" evidence="11">
    <location>
        <position position="2"/>
    </location>
</feature>
<feature type="splice variant" id="VSP_046260" description="In isoform 2." evidence="9">
    <location>
        <begin position="1"/>
        <end position="28"/>
    </location>
</feature>
<feature type="sequence conflict" description="In Ref. 1; AAC32312." evidence="9" ref="1">
    <original>E</original>
    <variation>V</variation>
    <location>
        <position position="12"/>
    </location>
</feature>
<feature type="sequence conflict" description="In Ref. 1; AAC32312." evidence="9" ref="1">
    <original>MGYESSA</original>
    <variation>HGLREQP</variation>
    <location>
        <begin position="101"/>
        <end position="107"/>
    </location>
</feature>
<feature type="helix" evidence="13">
    <location>
        <begin position="4"/>
        <end position="18"/>
    </location>
</feature>
<feature type="strand" evidence="13">
    <location>
        <begin position="24"/>
        <end position="30"/>
    </location>
</feature>
<feature type="strand" evidence="13">
    <location>
        <begin position="36"/>
        <end position="42"/>
    </location>
</feature>
<feature type="turn" evidence="13">
    <location>
        <begin position="48"/>
        <end position="51"/>
    </location>
</feature>
<feature type="strand" evidence="13">
    <location>
        <begin position="53"/>
        <end position="59"/>
    </location>
</feature>
<feature type="turn" evidence="13">
    <location>
        <begin position="62"/>
        <end position="65"/>
    </location>
</feature>
<feature type="strand" evidence="13">
    <location>
        <begin position="70"/>
        <end position="75"/>
    </location>
</feature>
<feature type="strand" evidence="13">
    <location>
        <begin position="86"/>
        <end position="88"/>
    </location>
</feature>
<feature type="helix" evidence="13">
    <location>
        <begin position="91"/>
        <end position="93"/>
    </location>
</feature>
<feature type="helix" evidence="12">
    <location>
        <begin position="105"/>
        <end position="108"/>
    </location>
</feature>
<feature type="helix" evidence="13">
    <location>
        <begin position="116"/>
        <end position="128"/>
    </location>
</feature>
<feature type="helix" evidence="12">
    <location>
        <begin position="135"/>
        <end position="137"/>
    </location>
</feature>
<feature type="helix" evidence="13">
    <location>
        <begin position="138"/>
        <end position="146"/>
    </location>
</feature>
<feature type="helix" evidence="13">
    <location>
        <begin position="148"/>
        <end position="163"/>
    </location>
</feature>
<name>UB2G2_HUMAN</name>
<dbReference type="EC" id="2.3.2.23" evidence="3"/>
<dbReference type="EMBL" id="AF032456">
    <property type="protein sequence ID" value="AAC32312.1"/>
    <property type="molecule type" value="mRNA"/>
</dbReference>
<dbReference type="EMBL" id="BT006914">
    <property type="protein sequence ID" value="AAP35560.1"/>
    <property type="molecule type" value="mRNA"/>
</dbReference>
<dbReference type="EMBL" id="AK290629">
    <property type="protein sequence ID" value="BAF83318.1"/>
    <property type="molecule type" value="mRNA"/>
</dbReference>
<dbReference type="EMBL" id="AL163300">
    <property type="protein sequence ID" value="CAB90551.1"/>
    <property type="molecule type" value="Genomic_DNA"/>
</dbReference>
<dbReference type="EMBL" id="CH471079">
    <property type="protein sequence ID" value="EAX09395.1"/>
    <property type="molecule type" value="Genomic_DNA"/>
</dbReference>
<dbReference type="EMBL" id="CH471079">
    <property type="protein sequence ID" value="EAX09397.1"/>
    <property type="molecule type" value="Genomic_DNA"/>
</dbReference>
<dbReference type="EMBL" id="CH471079">
    <property type="protein sequence ID" value="EAX09398.1"/>
    <property type="molecule type" value="Genomic_DNA"/>
</dbReference>
<dbReference type="EMBL" id="CH471079">
    <property type="protein sequence ID" value="EAX09399.1"/>
    <property type="molecule type" value="Genomic_DNA"/>
</dbReference>
<dbReference type="EMBL" id="BC001738">
    <property type="protein sequence ID" value="AAH01738.1"/>
    <property type="molecule type" value="mRNA"/>
</dbReference>
<dbReference type="EMBL" id="BC008351">
    <property type="protein sequence ID" value="AAH08351.1"/>
    <property type="molecule type" value="mRNA"/>
</dbReference>
<dbReference type="EMBL" id="BC011569">
    <property type="protein sequence ID" value="AAH11569.1"/>
    <property type="molecule type" value="mRNA"/>
</dbReference>
<dbReference type="CCDS" id="CCDS13714.1">
    <molecule id="P60604-1"/>
</dbReference>
<dbReference type="CCDS" id="CCDS33586.1">
    <molecule id="P60604-2"/>
</dbReference>
<dbReference type="RefSeq" id="NP_001189418.1">
    <property type="nucleotide sequence ID" value="NM_001202489.1"/>
</dbReference>
<dbReference type="RefSeq" id="NP_003334.2">
    <molecule id="P60604-1"/>
    <property type="nucleotide sequence ID" value="NM_003343.5"/>
</dbReference>
<dbReference type="RefSeq" id="NP_872630.1">
    <molecule id="P60604-2"/>
    <property type="nucleotide sequence ID" value="NM_182688.3"/>
</dbReference>
<dbReference type="RefSeq" id="XP_016883958.1">
    <property type="nucleotide sequence ID" value="XM_017028469.1"/>
</dbReference>
<dbReference type="PDB" id="2CYX">
    <property type="method" value="X-ray"/>
    <property type="resolution" value="2.56 A"/>
    <property type="chains" value="A/B/C=1-165"/>
</dbReference>
<dbReference type="PDB" id="2KLY">
    <property type="method" value="NMR"/>
    <property type="chains" value="A=1-165"/>
</dbReference>
<dbReference type="PDB" id="2LXP">
    <property type="method" value="NMR"/>
    <property type="chains" value="A=2-165"/>
</dbReference>
<dbReference type="PDB" id="3H8K">
    <property type="method" value="X-ray"/>
    <property type="resolution" value="1.80 A"/>
    <property type="chains" value="A=2-165"/>
</dbReference>
<dbReference type="PDB" id="4LAD">
    <property type="method" value="X-ray"/>
    <property type="resolution" value="2.30 A"/>
    <property type="chains" value="A=1-165"/>
</dbReference>
<dbReference type="PDB" id="7LEW">
    <property type="method" value="X-ray"/>
    <property type="resolution" value="1.74 A"/>
    <property type="chains" value="A=1-165"/>
</dbReference>
<dbReference type="PDB" id="8T0S">
    <property type="method" value="X-ray"/>
    <property type="resolution" value="1.95 A"/>
    <property type="chains" value="A=1-165"/>
</dbReference>
<dbReference type="PDBsum" id="2CYX"/>
<dbReference type="PDBsum" id="2KLY"/>
<dbReference type="PDBsum" id="2LXP"/>
<dbReference type="PDBsum" id="3H8K"/>
<dbReference type="PDBsum" id="4LAD"/>
<dbReference type="PDBsum" id="7LEW"/>
<dbReference type="PDBsum" id="8T0S"/>
<dbReference type="BMRB" id="P60604"/>
<dbReference type="SMR" id="P60604"/>
<dbReference type="BioGRID" id="113175">
    <property type="interactions" value="89"/>
</dbReference>
<dbReference type="DIP" id="DIP-50750N"/>
<dbReference type="FunCoup" id="P60604">
    <property type="interactions" value="2608"/>
</dbReference>
<dbReference type="IntAct" id="P60604">
    <property type="interactions" value="42"/>
</dbReference>
<dbReference type="MINT" id="P60604"/>
<dbReference type="STRING" id="9606.ENSP00000338348"/>
<dbReference type="ChEMBL" id="CHEMBL4523256"/>
<dbReference type="iPTMnet" id="P60604"/>
<dbReference type="PhosphoSitePlus" id="P60604"/>
<dbReference type="SwissPalm" id="P60604"/>
<dbReference type="BioMuta" id="UBE2G2"/>
<dbReference type="DMDM" id="45593583"/>
<dbReference type="jPOST" id="P60604"/>
<dbReference type="MassIVE" id="P60604"/>
<dbReference type="PaxDb" id="9606-ENSP00000338348"/>
<dbReference type="PeptideAtlas" id="P60604"/>
<dbReference type="ProteomicsDB" id="1554"/>
<dbReference type="ProteomicsDB" id="57218">
    <molecule id="P60604-1"/>
</dbReference>
<dbReference type="Pumba" id="P60604"/>
<dbReference type="TopDownProteomics" id="P60604-1">
    <molecule id="P60604-1"/>
</dbReference>
<dbReference type="Antibodypedia" id="1148">
    <property type="antibodies" value="423 antibodies from 32 providers"/>
</dbReference>
<dbReference type="DNASU" id="7327"/>
<dbReference type="Ensembl" id="ENST00000330942.9">
    <molecule id="P60604-2"/>
    <property type="protein sequence ID" value="ENSP00000331384.5"/>
    <property type="gene ID" value="ENSG00000184787.19"/>
</dbReference>
<dbReference type="Ensembl" id="ENST00000345496.7">
    <molecule id="P60604-1"/>
    <property type="protein sequence ID" value="ENSP00000338348.3"/>
    <property type="gene ID" value="ENSG00000184787.19"/>
</dbReference>
<dbReference type="GeneID" id="7327"/>
<dbReference type="KEGG" id="hsa:7327"/>
<dbReference type="MANE-Select" id="ENST00000345496.7">
    <property type="protein sequence ID" value="ENSP00000338348.3"/>
    <property type="RefSeq nucleotide sequence ID" value="NM_003343.6"/>
    <property type="RefSeq protein sequence ID" value="NP_003334.2"/>
</dbReference>
<dbReference type="UCSC" id="uc002zfx.4">
    <molecule id="P60604-1"/>
    <property type="organism name" value="human"/>
</dbReference>
<dbReference type="AGR" id="HGNC:12483"/>
<dbReference type="CTD" id="7327"/>
<dbReference type="DisGeNET" id="7327"/>
<dbReference type="GeneCards" id="UBE2G2"/>
<dbReference type="HGNC" id="HGNC:12483">
    <property type="gene designation" value="UBE2G2"/>
</dbReference>
<dbReference type="HPA" id="ENSG00000184787">
    <property type="expression patterns" value="Low tissue specificity"/>
</dbReference>
<dbReference type="MIM" id="603124">
    <property type="type" value="gene"/>
</dbReference>
<dbReference type="neXtProt" id="NX_P60604"/>
<dbReference type="OpenTargets" id="ENSG00000184787"/>
<dbReference type="PharmGKB" id="PA37132"/>
<dbReference type="VEuPathDB" id="HostDB:ENSG00000184787"/>
<dbReference type="eggNOG" id="KOG0426">
    <property type="taxonomic scope" value="Eukaryota"/>
</dbReference>
<dbReference type="GeneTree" id="ENSGT00940000158193"/>
<dbReference type="HOGENOM" id="CLU_030988_10_1_1"/>
<dbReference type="InParanoid" id="P60604"/>
<dbReference type="OMA" id="APDGMFT"/>
<dbReference type="OrthoDB" id="19692at2759"/>
<dbReference type="PAN-GO" id="P60604">
    <property type="GO annotations" value="5 GO annotations based on evolutionary models"/>
</dbReference>
<dbReference type="PhylomeDB" id="P60604"/>
<dbReference type="TreeFam" id="TF101118"/>
<dbReference type="BRENDA" id="2.3.2.23">
    <property type="organism ID" value="2681"/>
</dbReference>
<dbReference type="BRENDA" id="2.3.2.24">
    <property type="organism ID" value="2681"/>
</dbReference>
<dbReference type="PathwayCommons" id="P60604"/>
<dbReference type="Reactome" id="R-HSA-8866652">
    <property type="pathway name" value="Synthesis of active ubiquitin: roles of E1 and E2 enzymes"/>
</dbReference>
<dbReference type="Reactome" id="R-HSA-983168">
    <property type="pathway name" value="Antigen processing: Ubiquitination &amp; Proteasome degradation"/>
</dbReference>
<dbReference type="SignaLink" id="P60604"/>
<dbReference type="SIGNOR" id="P60604"/>
<dbReference type="UniPathway" id="UPA00143"/>
<dbReference type="BioGRID-ORCS" id="7327">
    <property type="hits" value="181 hits in 1174 CRISPR screens"/>
</dbReference>
<dbReference type="ChiTaRS" id="UBE2G2">
    <property type="organism name" value="human"/>
</dbReference>
<dbReference type="EvolutionaryTrace" id="P60604"/>
<dbReference type="GeneWiki" id="UBE2G2"/>
<dbReference type="GenomeRNAi" id="7327"/>
<dbReference type="Pharos" id="P60604">
    <property type="development level" value="Tbio"/>
</dbReference>
<dbReference type="PRO" id="PR:P60604"/>
<dbReference type="Proteomes" id="UP000005640">
    <property type="component" value="Chromosome 21"/>
</dbReference>
<dbReference type="RNAct" id="P60604">
    <property type="molecule type" value="protein"/>
</dbReference>
<dbReference type="Bgee" id="ENSG00000184787">
    <property type="expression patterns" value="Expressed in tendon of biceps brachii and 204 other cell types or tissues"/>
</dbReference>
<dbReference type="ExpressionAtlas" id="P60604">
    <property type="expression patterns" value="baseline and differential"/>
</dbReference>
<dbReference type="GO" id="GO:0005829">
    <property type="term" value="C:cytosol"/>
    <property type="evidence" value="ECO:0007005"/>
    <property type="project" value="UniProtKB"/>
</dbReference>
<dbReference type="GO" id="GO:0005783">
    <property type="term" value="C:endoplasmic reticulum"/>
    <property type="evidence" value="ECO:0000314"/>
    <property type="project" value="UniProtKB"/>
</dbReference>
<dbReference type="GO" id="GO:0005811">
    <property type="term" value="C:lipid droplet"/>
    <property type="evidence" value="ECO:0000314"/>
    <property type="project" value="UniProtKB"/>
</dbReference>
<dbReference type="GO" id="GO:0005524">
    <property type="term" value="F:ATP binding"/>
    <property type="evidence" value="ECO:0007669"/>
    <property type="project" value="UniProtKB-KW"/>
</dbReference>
<dbReference type="GO" id="GO:0042802">
    <property type="term" value="F:identical protein binding"/>
    <property type="evidence" value="ECO:0007669"/>
    <property type="project" value="Ensembl"/>
</dbReference>
<dbReference type="GO" id="GO:0061631">
    <property type="term" value="F:ubiquitin conjugating enzyme activity"/>
    <property type="evidence" value="ECO:0000314"/>
    <property type="project" value="MGI"/>
</dbReference>
<dbReference type="GO" id="GO:0004842">
    <property type="term" value="F:ubiquitin-protein transferase activity"/>
    <property type="evidence" value="ECO:0000314"/>
    <property type="project" value="UniProtKB"/>
</dbReference>
<dbReference type="GO" id="GO:0035458">
    <property type="term" value="P:cellular response to interferon-beta"/>
    <property type="evidence" value="ECO:0000315"/>
    <property type="project" value="UniProtKB"/>
</dbReference>
<dbReference type="GO" id="GO:0036503">
    <property type="term" value="P:ERAD pathway"/>
    <property type="evidence" value="ECO:0000315"/>
    <property type="project" value="UniProtKB"/>
</dbReference>
<dbReference type="GO" id="GO:1904153">
    <property type="term" value="P:negative regulation of retrograde protein transport, ER to cytosol"/>
    <property type="evidence" value="ECO:0000315"/>
    <property type="project" value="ParkinsonsUK-UCL"/>
</dbReference>
<dbReference type="GO" id="GO:0070936">
    <property type="term" value="P:protein K48-linked ubiquitination"/>
    <property type="evidence" value="ECO:0000314"/>
    <property type="project" value="UniProtKB"/>
</dbReference>
<dbReference type="GO" id="GO:0000209">
    <property type="term" value="P:protein polyubiquitination"/>
    <property type="evidence" value="ECO:0000318"/>
    <property type="project" value="GO_Central"/>
</dbReference>
<dbReference type="GO" id="GO:0006511">
    <property type="term" value="P:ubiquitin-dependent protein catabolic process"/>
    <property type="evidence" value="ECO:0000318"/>
    <property type="project" value="GO_Central"/>
</dbReference>
<dbReference type="CDD" id="cd23796">
    <property type="entry name" value="UBCc_UBE2G2"/>
    <property type="match status" value="1"/>
</dbReference>
<dbReference type="DisProt" id="DP02100"/>
<dbReference type="FunFam" id="3.10.110.10:FF:000008">
    <property type="entry name" value="Ubiquitin-conjugating enzyme E2 G2"/>
    <property type="match status" value="1"/>
</dbReference>
<dbReference type="Gene3D" id="3.10.110.10">
    <property type="entry name" value="Ubiquitin Conjugating Enzyme"/>
    <property type="match status" value="1"/>
</dbReference>
<dbReference type="IDEAL" id="IID00307"/>
<dbReference type="InterPro" id="IPR050113">
    <property type="entry name" value="Ub_conjugating_enzyme"/>
</dbReference>
<dbReference type="InterPro" id="IPR000608">
    <property type="entry name" value="UBQ-conjugat_E2_core"/>
</dbReference>
<dbReference type="InterPro" id="IPR023313">
    <property type="entry name" value="UBQ-conjugating_AS"/>
</dbReference>
<dbReference type="InterPro" id="IPR016135">
    <property type="entry name" value="UBQ-conjugating_enzyme/RWD"/>
</dbReference>
<dbReference type="PANTHER" id="PTHR24067">
    <property type="entry name" value="UBIQUITIN-CONJUGATING ENZYME E2"/>
    <property type="match status" value="1"/>
</dbReference>
<dbReference type="Pfam" id="PF00179">
    <property type="entry name" value="UQ_con"/>
    <property type="match status" value="1"/>
</dbReference>
<dbReference type="SMART" id="SM00212">
    <property type="entry name" value="UBCc"/>
    <property type="match status" value="1"/>
</dbReference>
<dbReference type="SUPFAM" id="SSF54495">
    <property type="entry name" value="UBC-like"/>
    <property type="match status" value="1"/>
</dbReference>
<dbReference type="PROSITE" id="PS00183">
    <property type="entry name" value="UBC_1"/>
    <property type="match status" value="1"/>
</dbReference>
<dbReference type="PROSITE" id="PS50127">
    <property type="entry name" value="UBC_2"/>
    <property type="match status" value="1"/>
</dbReference>
<keyword id="KW-0002">3D-structure</keyword>
<keyword id="KW-0007">Acetylation</keyword>
<keyword id="KW-0025">Alternative splicing</keyword>
<keyword id="KW-0067">ATP-binding</keyword>
<keyword id="KW-0256">Endoplasmic reticulum</keyword>
<keyword id="KW-0551">Lipid droplet</keyword>
<keyword id="KW-0547">Nucleotide-binding</keyword>
<keyword id="KW-1267">Proteomics identification</keyword>
<keyword id="KW-1185">Reference proteome</keyword>
<keyword id="KW-0808">Transferase</keyword>
<keyword id="KW-0833">Ubl conjugation pathway</keyword>
<organism>
    <name type="scientific">Homo sapiens</name>
    <name type="common">Human</name>
    <dbReference type="NCBI Taxonomy" id="9606"/>
    <lineage>
        <taxon>Eukaryota</taxon>
        <taxon>Metazoa</taxon>
        <taxon>Chordata</taxon>
        <taxon>Craniata</taxon>
        <taxon>Vertebrata</taxon>
        <taxon>Euteleostomi</taxon>
        <taxon>Mammalia</taxon>
        <taxon>Eutheria</taxon>
        <taxon>Euarchontoglires</taxon>
        <taxon>Primates</taxon>
        <taxon>Haplorrhini</taxon>
        <taxon>Catarrhini</taxon>
        <taxon>Hominidae</taxon>
        <taxon>Homo</taxon>
    </lineage>
</organism>
<sequence length="165" mass="18566">MAGTALKRLMAEYKQLTLNPPEGIVAGPMNEENFFEWEALIMGPEDTCFEFGVFPAILSFPLDYPLSPPKMRFTCEMFHPNIYPDGRVCISILHAPGDDPMGYESSAERWSPVQSVEKILLSVVSMLAEPNDESGANVDASKMWRDDREQFYKIAKQIVQKSLGL</sequence>
<reference key="1">
    <citation type="journal article" date="1998" name="Genomics">
        <title>Identification, expression, and chromosomal localization of ubiquitin conjugating enzyme 7 (UBE2G2), a human homologue of the Saccharomyces cerevisiae UBC7 gene.</title>
        <authorList>
            <person name="Katsanis N."/>
            <person name="Fisher E.M.C."/>
        </authorList>
    </citation>
    <scope>NUCLEOTIDE SEQUENCE [MRNA] (ISOFORM 1)</scope>
</reference>
<reference key="2">
    <citation type="submission" date="2004-10" db="EMBL/GenBank/DDBJ databases">
        <title>Cloning of human full-length CDSs in BD Creator(TM) system donor vector.</title>
        <authorList>
            <person name="Kalnine N."/>
            <person name="Chen X."/>
            <person name="Rolfs A."/>
            <person name="Halleck A."/>
            <person name="Hines L."/>
            <person name="Eisenstein S."/>
            <person name="Koundinya M."/>
            <person name="Raphael J."/>
            <person name="Moreira D."/>
            <person name="Kelley T."/>
            <person name="LaBaer J."/>
            <person name="Lin Y."/>
            <person name="Phelan M."/>
            <person name="Farmer A."/>
        </authorList>
    </citation>
    <scope>NUCLEOTIDE SEQUENCE [LARGE SCALE MRNA] (ISOFORM 1)</scope>
</reference>
<reference key="3">
    <citation type="journal article" date="2004" name="Nat. Genet.">
        <title>Complete sequencing and characterization of 21,243 full-length human cDNAs.</title>
        <authorList>
            <person name="Ota T."/>
            <person name="Suzuki Y."/>
            <person name="Nishikawa T."/>
            <person name="Otsuki T."/>
            <person name="Sugiyama T."/>
            <person name="Irie R."/>
            <person name="Wakamatsu A."/>
            <person name="Hayashi K."/>
            <person name="Sato H."/>
            <person name="Nagai K."/>
            <person name="Kimura K."/>
            <person name="Makita H."/>
            <person name="Sekine M."/>
            <person name="Obayashi M."/>
            <person name="Nishi T."/>
            <person name="Shibahara T."/>
            <person name="Tanaka T."/>
            <person name="Ishii S."/>
            <person name="Yamamoto J."/>
            <person name="Saito K."/>
            <person name="Kawai Y."/>
            <person name="Isono Y."/>
            <person name="Nakamura Y."/>
            <person name="Nagahari K."/>
            <person name="Murakami K."/>
            <person name="Yasuda T."/>
            <person name="Iwayanagi T."/>
            <person name="Wagatsuma M."/>
            <person name="Shiratori A."/>
            <person name="Sudo H."/>
            <person name="Hosoiri T."/>
            <person name="Kaku Y."/>
            <person name="Kodaira H."/>
            <person name="Kondo H."/>
            <person name="Sugawara M."/>
            <person name="Takahashi M."/>
            <person name="Kanda K."/>
            <person name="Yokoi T."/>
            <person name="Furuya T."/>
            <person name="Kikkawa E."/>
            <person name="Omura Y."/>
            <person name="Abe K."/>
            <person name="Kamihara K."/>
            <person name="Katsuta N."/>
            <person name="Sato K."/>
            <person name="Tanikawa M."/>
            <person name="Yamazaki M."/>
            <person name="Ninomiya K."/>
            <person name="Ishibashi T."/>
            <person name="Yamashita H."/>
            <person name="Murakawa K."/>
            <person name="Fujimori K."/>
            <person name="Tanai H."/>
            <person name="Kimata M."/>
            <person name="Watanabe M."/>
            <person name="Hiraoka S."/>
            <person name="Chiba Y."/>
            <person name="Ishida S."/>
            <person name="Ono Y."/>
            <person name="Takiguchi S."/>
            <person name="Watanabe S."/>
            <person name="Yosida M."/>
            <person name="Hotuta T."/>
            <person name="Kusano J."/>
            <person name="Kanehori K."/>
            <person name="Takahashi-Fujii A."/>
            <person name="Hara H."/>
            <person name="Tanase T.-O."/>
            <person name="Nomura Y."/>
            <person name="Togiya S."/>
            <person name="Komai F."/>
            <person name="Hara R."/>
            <person name="Takeuchi K."/>
            <person name="Arita M."/>
            <person name="Imose N."/>
            <person name="Musashino K."/>
            <person name="Yuuki H."/>
            <person name="Oshima A."/>
            <person name="Sasaki N."/>
            <person name="Aotsuka S."/>
            <person name="Yoshikawa Y."/>
            <person name="Matsunawa H."/>
            <person name="Ichihara T."/>
            <person name="Shiohata N."/>
            <person name="Sano S."/>
            <person name="Moriya S."/>
            <person name="Momiyama H."/>
            <person name="Satoh N."/>
            <person name="Takami S."/>
            <person name="Terashima Y."/>
            <person name="Suzuki O."/>
            <person name="Nakagawa S."/>
            <person name="Senoh A."/>
            <person name="Mizoguchi H."/>
            <person name="Goto Y."/>
            <person name="Shimizu F."/>
            <person name="Wakebe H."/>
            <person name="Hishigaki H."/>
            <person name="Watanabe T."/>
            <person name="Sugiyama A."/>
            <person name="Takemoto M."/>
            <person name="Kawakami B."/>
            <person name="Yamazaki M."/>
            <person name="Watanabe K."/>
            <person name="Kumagai A."/>
            <person name="Itakura S."/>
            <person name="Fukuzumi Y."/>
            <person name="Fujimori Y."/>
            <person name="Komiyama M."/>
            <person name="Tashiro H."/>
            <person name="Tanigami A."/>
            <person name="Fujiwara T."/>
            <person name="Ono T."/>
            <person name="Yamada K."/>
            <person name="Fujii Y."/>
            <person name="Ozaki K."/>
            <person name="Hirao M."/>
            <person name="Ohmori Y."/>
            <person name="Kawabata A."/>
            <person name="Hikiji T."/>
            <person name="Kobatake N."/>
            <person name="Inagaki H."/>
            <person name="Ikema Y."/>
            <person name="Okamoto S."/>
            <person name="Okitani R."/>
            <person name="Kawakami T."/>
            <person name="Noguchi S."/>
            <person name="Itoh T."/>
            <person name="Shigeta K."/>
            <person name="Senba T."/>
            <person name="Matsumura K."/>
            <person name="Nakajima Y."/>
            <person name="Mizuno T."/>
            <person name="Morinaga M."/>
            <person name="Sasaki M."/>
            <person name="Togashi T."/>
            <person name="Oyama M."/>
            <person name="Hata H."/>
            <person name="Watanabe M."/>
            <person name="Komatsu T."/>
            <person name="Mizushima-Sugano J."/>
            <person name="Satoh T."/>
            <person name="Shirai Y."/>
            <person name="Takahashi Y."/>
            <person name="Nakagawa K."/>
            <person name="Okumura K."/>
            <person name="Nagase T."/>
            <person name="Nomura N."/>
            <person name="Kikuchi H."/>
            <person name="Masuho Y."/>
            <person name="Yamashita R."/>
            <person name="Nakai K."/>
            <person name="Yada T."/>
            <person name="Nakamura Y."/>
            <person name="Ohara O."/>
            <person name="Isogai T."/>
            <person name="Sugano S."/>
        </authorList>
    </citation>
    <scope>NUCLEOTIDE SEQUENCE [LARGE SCALE MRNA] (ISOFORM 1)</scope>
    <source>
        <tissue>Heart</tissue>
    </source>
</reference>
<reference key="4">
    <citation type="journal article" date="2000" name="Nature">
        <title>The DNA sequence of human chromosome 21.</title>
        <authorList>
            <person name="Hattori M."/>
            <person name="Fujiyama A."/>
            <person name="Taylor T.D."/>
            <person name="Watanabe H."/>
            <person name="Yada T."/>
            <person name="Park H.-S."/>
            <person name="Toyoda A."/>
            <person name="Ishii K."/>
            <person name="Totoki Y."/>
            <person name="Choi D.-K."/>
            <person name="Groner Y."/>
            <person name="Soeda E."/>
            <person name="Ohki M."/>
            <person name="Takagi T."/>
            <person name="Sakaki Y."/>
            <person name="Taudien S."/>
            <person name="Blechschmidt K."/>
            <person name="Polley A."/>
            <person name="Menzel U."/>
            <person name="Delabar J."/>
            <person name="Kumpf K."/>
            <person name="Lehmann R."/>
            <person name="Patterson D."/>
            <person name="Reichwald K."/>
            <person name="Rump A."/>
            <person name="Schillhabel M."/>
            <person name="Schudy A."/>
            <person name="Zimmermann W."/>
            <person name="Rosenthal A."/>
            <person name="Kudoh J."/>
            <person name="Shibuya K."/>
            <person name="Kawasaki K."/>
            <person name="Asakawa S."/>
            <person name="Shintani A."/>
            <person name="Sasaki T."/>
            <person name="Nagamine K."/>
            <person name="Mitsuyama S."/>
            <person name="Antonarakis S.E."/>
            <person name="Minoshima S."/>
            <person name="Shimizu N."/>
            <person name="Nordsiek G."/>
            <person name="Hornischer K."/>
            <person name="Brandt P."/>
            <person name="Scharfe M."/>
            <person name="Schoen O."/>
            <person name="Desario A."/>
            <person name="Reichelt J."/>
            <person name="Kauer G."/>
            <person name="Bloecker H."/>
            <person name="Ramser J."/>
            <person name="Beck A."/>
            <person name="Klages S."/>
            <person name="Hennig S."/>
            <person name="Riesselmann L."/>
            <person name="Dagand E."/>
            <person name="Wehrmeyer S."/>
            <person name="Borzym K."/>
            <person name="Gardiner K."/>
            <person name="Nizetic D."/>
            <person name="Francis F."/>
            <person name="Lehrach H."/>
            <person name="Reinhardt R."/>
            <person name="Yaspo M.-L."/>
        </authorList>
    </citation>
    <scope>NUCLEOTIDE SEQUENCE [LARGE SCALE GENOMIC DNA]</scope>
</reference>
<reference key="5">
    <citation type="submission" date="2005-09" db="EMBL/GenBank/DDBJ databases">
        <authorList>
            <person name="Mural R.J."/>
            <person name="Istrail S."/>
            <person name="Sutton G.G."/>
            <person name="Florea L."/>
            <person name="Halpern A.L."/>
            <person name="Mobarry C.M."/>
            <person name="Lippert R."/>
            <person name="Walenz B."/>
            <person name="Shatkay H."/>
            <person name="Dew I."/>
            <person name="Miller J.R."/>
            <person name="Flanigan M.J."/>
            <person name="Edwards N.J."/>
            <person name="Bolanos R."/>
            <person name="Fasulo D."/>
            <person name="Halldorsson B.V."/>
            <person name="Hannenhalli S."/>
            <person name="Turner R."/>
            <person name="Yooseph S."/>
            <person name="Lu F."/>
            <person name="Nusskern D.R."/>
            <person name="Shue B.C."/>
            <person name="Zheng X.H."/>
            <person name="Zhong F."/>
            <person name="Delcher A.L."/>
            <person name="Huson D.H."/>
            <person name="Kravitz S.A."/>
            <person name="Mouchard L."/>
            <person name="Reinert K."/>
            <person name="Remington K.A."/>
            <person name="Clark A.G."/>
            <person name="Waterman M.S."/>
            <person name="Eichler E.E."/>
            <person name="Adams M.D."/>
            <person name="Hunkapiller M.W."/>
            <person name="Myers E.W."/>
            <person name="Venter J.C."/>
        </authorList>
    </citation>
    <scope>NUCLEOTIDE SEQUENCE [LARGE SCALE GENOMIC DNA]</scope>
</reference>
<reference key="6">
    <citation type="journal article" date="2004" name="Genome Res.">
        <title>The status, quality, and expansion of the NIH full-length cDNA project: the Mammalian Gene Collection (MGC).</title>
        <authorList>
            <consortium name="The MGC Project Team"/>
        </authorList>
    </citation>
    <scope>NUCLEOTIDE SEQUENCE [LARGE SCALE MRNA] (ISOFORM 1)</scope>
    <source>
        <tissue>Lung</tissue>
    </source>
</reference>
<reference key="7">
    <citation type="journal article" date="2010" name="J. Biol. Chem.">
        <title>The E2 ubiquitin-conjugating enzymes direct polyubiquitination to preferred lysines.</title>
        <authorList>
            <person name="David Y."/>
            <person name="Ziv T."/>
            <person name="Admon A."/>
            <person name="Navon A."/>
        </authorList>
    </citation>
    <scope>FUNCTION</scope>
    <scope>CATALYTIC ACTIVITY</scope>
</reference>
<reference key="8">
    <citation type="journal article" date="2011" name="BMC Syst. Biol.">
        <title>Initial characterization of the human central proteome.</title>
        <authorList>
            <person name="Burkard T.R."/>
            <person name="Planyavsky M."/>
            <person name="Kaupe I."/>
            <person name="Breitwieser F.P."/>
            <person name="Buerckstuemmer T."/>
            <person name="Bennett K.L."/>
            <person name="Superti-Furga G."/>
            <person name="Colinge J."/>
        </authorList>
    </citation>
    <scope>IDENTIFICATION BY MASS SPECTROMETRY [LARGE SCALE ANALYSIS]</scope>
</reference>
<reference key="9">
    <citation type="journal article" date="2011" name="J. Biol. Chem.">
        <title>Ancient ubiquitous protein 1 (AUP1) localizes to lipid droplets and binds the E2 ubiquitin conjugase G2 (Ube2g2) via its G2 binding region.</title>
        <authorList>
            <person name="Spandl J."/>
            <person name="Lohmann D."/>
            <person name="Kuerschner L."/>
            <person name="Moessinger C."/>
            <person name="Thiele C."/>
        </authorList>
    </citation>
    <scope>INTERACTION WITH AUP1</scope>
    <scope>SUBCELLULAR LOCATION</scope>
    <scope>IDENTIFICATION BY MASS SPECTROMETRY</scope>
</reference>
<reference key="10">
    <citation type="journal article" date="2011" name="J. Biol. Chem.">
        <title>Dual role of ancient ubiquitous protein 1 (AUP1) in lipid droplet accumulation and endoplasmic reticulum (ER) protein quality control.</title>
        <authorList>
            <person name="Klemm E.J."/>
            <person name="Spooner E."/>
            <person name="Ploegh H.L."/>
        </authorList>
    </citation>
    <scope>INTERACTION WITH AUP1</scope>
    <scope>IDENTIFICATION BY MASS SPECTROMETRY</scope>
</reference>
<reference key="11">
    <citation type="journal article" date="2012" name="Mol. Cell">
        <title>STT3B-dependent posttranslational N-glycosylation as a surveillance system for secretory protein.</title>
        <authorList>
            <person name="Sato T."/>
            <person name="Sako Y."/>
            <person name="Sho M."/>
            <person name="Momohara M."/>
            <person name="Suico M.A."/>
            <person name="Shuto T."/>
            <person name="Nishitoh H."/>
            <person name="Okiyoneda T."/>
            <person name="Kokame K."/>
            <person name="Kaneko M."/>
            <person name="Taura M."/>
            <person name="Miyata M."/>
            <person name="Chosa K."/>
            <person name="Koga T."/>
            <person name="Morino-Koga S."/>
            <person name="Wada I."/>
            <person name="Kai H."/>
        </authorList>
    </citation>
    <scope>FUNCTION IN ERAD PATHWAY</scope>
</reference>
<reference key="12">
    <citation type="journal article" date="2013" name="Mol. Biol. Cell">
        <title>Ancient ubiquitous protein-1 mediates sterol-induced ubiquitination of 3-hydroxy-3-methylglutaryl CoA reductase in lipid droplet-associated endoplasmic reticulum membranes.</title>
        <authorList>
            <person name="Jo Y."/>
            <person name="Hartman I.Z."/>
            <person name="DeBose-Boyd R.A."/>
        </authorList>
    </citation>
    <scope>FUNCTION</scope>
    <scope>INTERACTION WITH AUP1; AMFR AND RNF139</scope>
    <scope>SUBCELLULAR LOCATION</scope>
</reference>
<reference key="13">
    <citation type="journal article" date="2015" name="Proteomics">
        <title>N-terminome analysis of the human mitochondrial proteome.</title>
        <authorList>
            <person name="Vaca Jacome A.S."/>
            <person name="Rabilloud T."/>
            <person name="Schaeffer-Reiss C."/>
            <person name="Rompais M."/>
            <person name="Ayoub D."/>
            <person name="Lane L."/>
            <person name="Bairoch A."/>
            <person name="Van Dorsselaer A."/>
            <person name="Carapito C."/>
        </authorList>
    </citation>
    <scope>ACETYLATION [LARGE SCALE ANALYSIS] AT ALA-2</scope>
    <scope>CLEAVAGE OF INITIATOR METHIONINE [LARGE SCALE ANALYSIS]</scope>
    <scope>IDENTIFICATION BY MASS SPECTROMETRY [LARGE SCALE ANALYSIS]</scope>
</reference>
<reference key="14">
    <citation type="journal article" date="2006" name="Acta Crystallogr. F">
        <title>Structure of human ubiquitin-conjugating enzyme E2 G2 (UBE2G2/UBC7).</title>
        <authorList>
            <person name="Arai R."/>
            <person name="Yoshikawa S."/>
            <person name="Murayama K."/>
            <person name="Imai Y."/>
            <person name="Takahashi R."/>
            <person name="Shirouzu M."/>
            <person name="Yokoyama S."/>
        </authorList>
    </citation>
    <scope>X-RAY CRYSTALLOGRAPHY (2.56 ANGSTROMS)</scope>
</reference>
<comment type="function">
    <text evidence="3 6 7">Accepts ubiquitin from the E1 complex and catalyzes its covalent attachment to other proteins (PubMed:20061386). In vitro catalyzes 'Lys-48'-linked polyubiquitination (PubMed:20061386). Involved in endoplasmic reticulum-associated degradation (ERAD) (PubMed:22607976). Required for sterol-induced ubiquitination of 3-hydroxy-3-methylglutaryl coenzyme A reductase and its subsequent proteasomal degradation (PubMed:23223569).</text>
</comment>
<comment type="catalytic activity">
    <reaction evidence="1 2 3">
        <text>S-ubiquitinyl-[E1 ubiquitin-activating enzyme]-L-cysteine + [E2 ubiquitin-conjugating enzyme]-L-cysteine = [E1 ubiquitin-activating enzyme]-L-cysteine + S-ubiquitinyl-[E2 ubiquitin-conjugating enzyme]-L-cysteine.</text>
        <dbReference type="EC" id="2.3.2.23"/>
    </reaction>
</comment>
<comment type="pathway">
    <text evidence="1">Protein modification; protein ubiquitination.</text>
</comment>
<comment type="subunit">
    <text evidence="4 5 7">Interacts with AUP1 (via C-terminus); the interaction recruits UBE2G2 to lipid droplets (PubMed:21127063, PubMed:21857022, PubMed:23223569). Interacts with ubiquitin ligases AMFR/gp78 and RNF139/TRC8; recruitment to lipid droplets by AUP1 facilitates interaction of UBE2G2 with AMFR and RNF139, leading to sterol-induced ubiquitination of 3-hydroxy-3-methylglutaryl coenzyme A reductase and its subsequent proteasomal degradation (PubMed:23223569).</text>
</comment>
<comment type="interaction">
    <interactant intactId="EBI-1051028">
        <id>P60604</id>
    </interactant>
    <interactant intactId="EBI-1046367">
        <id>Q9UKV5</id>
        <label>AMFR</label>
    </interactant>
    <organismsDiffer>false</organismsDiffer>
    <experiments>21</experiments>
</comment>
<comment type="interaction">
    <interactant intactId="EBI-1051028">
        <id>P60604</id>
    </interactant>
    <interactant intactId="EBI-1058701">
        <id>Q9Y679</id>
        <label>AUP1</label>
    </interactant>
    <organismsDiffer>false</organismsDiffer>
    <experiments>6</experiments>
</comment>
<comment type="interaction">
    <interactant intactId="EBI-1051028">
        <id>P60604</id>
    </interactant>
    <interactant intactId="EBI-9090282">
        <id>P27986-2</id>
        <label>PIK3R1</label>
    </interactant>
    <organismsDiffer>false</organismsDiffer>
    <experiments>3</experiments>
</comment>
<comment type="interaction">
    <interactant intactId="EBI-1051028">
        <id>P60604</id>
    </interactant>
    <interactant intactId="EBI-3390054">
        <id>P0CG48</id>
        <label>UBC</label>
    </interactant>
    <organismsDiffer>false</organismsDiffer>
    <experiments>3</experiments>
</comment>
<comment type="subcellular location">
    <subcellularLocation>
        <location evidence="7">Endoplasmic reticulum</location>
    </subcellularLocation>
    <subcellularLocation>
        <location evidence="4 7">Lipid droplet</location>
    </subcellularLocation>
</comment>
<comment type="alternative products">
    <event type="alternative splicing"/>
    <isoform>
        <id>P60604-1</id>
        <name>1</name>
        <sequence type="displayed"/>
    </isoform>
    <isoform>
        <id>P60604-2</id>
        <name>2</name>
        <sequence type="described" ref="VSP_046260"/>
    </isoform>
</comment>
<comment type="similarity">
    <text evidence="1">Belongs to the ubiquitin-conjugating enzyme family.</text>
</comment>
<evidence type="ECO:0000255" key="1">
    <source>
        <dbReference type="PROSITE-ProRule" id="PRU00388"/>
    </source>
</evidence>
<evidence type="ECO:0000255" key="2">
    <source>
        <dbReference type="PROSITE-ProRule" id="PRU10133"/>
    </source>
</evidence>
<evidence type="ECO:0000269" key="3">
    <source>
    </source>
</evidence>
<evidence type="ECO:0000269" key="4">
    <source>
    </source>
</evidence>
<evidence type="ECO:0000269" key="5">
    <source>
    </source>
</evidence>
<evidence type="ECO:0000269" key="6">
    <source>
    </source>
</evidence>
<evidence type="ECO:0000269" key="7">
    <source>
    </source>
</evidence>
<evidence type="ECO:0000303" key="8">
    <source>
    </source>
</evidence>
<evidence type="ECO:0000305" key="9"/>
<evidence type="ECO:0000312" key="10">
    <source>
        <dbReference type="HGNC" id="HGNC:12483"/>
    </source>
</evidence>
<evidence type="ECO:0007744" key="11">
    <source>
    </source>
</evidence>
<evidence type="ECO:0007829" key="12">
    <source>
        <dbReference type="PDB" id="2CYX"/>
    </source>
</evidence>
<evidence type="ECO:0007829" key="13">
    <source>
        <dbReference type="PDB" id="7LEW"/>
    </source>
</evidence>
<accession>P60604</accession>
<accession>A6NMQ7</accession>
<accession>A8K3L4</accession>
<accession>D3DSL7</accession>
<accession>P56554</accession>